<keyword id="KW-0156">Chromatin regulator</keyword>
<keyword id="KW-0378">Hydrolase</keyword>
<keyword id="KW-0539">Nucleus</keyword>
<keyword id="KW-1185">Reference proteome</keyword>
<keyword id="KW-0678">Repressor</keyword>
<keyword id="KW-0804">Transcription</keyword>
<keyword id="KW-0805">Transcription regulation</keyword>
<protein>
    <recommendedName>
        <fullName>Histone deacetylase 9</fullName>
        <ecNumber>3.5.1.98</ecNumber>
    </recommendedName>
    <alternativeName>
        <fullName>Histone deacetylase-related protein</fullName>
    </alternativeName>
    <alternativeName>
        <fullName>MEF2-interacting transcription repressor MITR</fullName>
    </alternativeName>
</protein>
<accession>Q9YGY4</accession>
<evidence type="ECO:0000250" key="1"/>
<evidence type="ECO:0000256" key="2">
    <source>
        <dbReference type="SAM" id="MobiDB-lite"/>
    </source>
</evidence>
<evidence type="ECO:0000269" key="3">
    <source>
    </source>
</evidence>
<evidence type="ECO:0000305" key="4"/>
<gene>
    <name type="primary">hdac9</name>
    <name type="synonym">hdrp</name>
    <name type="synonym">mitr</name>
</gene>
<sequence>MLQTIYESESYFSSDGVAGREQLLAEQRMHAMIGKDIKSEFPIGLESISPLDLRTDLRTAVPVGDPGLREKQLQQELLIIKQQQQIQKQLLIAEFQKQHENLTRQHQVQLQEHLKLQQELLAMKQQQELLEREKEQKMEQQRKEQEAERHRQEQQLCHPRSKDRVKERAVASTEVKQKLQEFILSKSATKEPLTNGTSHSMGRHPKLWYTAAHHTSLDQSSPPPSGTSPTYKCPPPGNQDDFPLRKTASEPNLKVRSRLKQKVVERRSSPLLRRKDSIVSSSYKKRIFEVAESSVSSSSPVSGPSSPNNGPVAMEAEHETPVLSVNSRIENLVSHHHLVHHERSLSLLNLYTSPSLPNITLGLHATATQLNTSSSLKEQQKYDPQAPRQGVSMAGQYAGGIPTSSNHVSLEGKANSHQAILQHLLLKEQMRQQKILASGGTPVLHQSPLAAKDRVSPAGRVAHKLPRHRPLHRTQSAPLPQSTLAQLVIQQQHQQFLEKQKQYQQQIHMNKILSKSIEQLRQPEGHLEEAEEDLHGDNLMQEKSSSIDNTRSYSSTDLRTGPFGSVKVKEEPPDSENEIKTHLQSEQKSVFAQQVT</sequence>
<proteinExistence type="evidence at protein level"/>
<name>HDAC9_XENLA</name>
<comment type="function">
    <text evidence="3">Devoided of intrinsic deacetylase activity, promotes the deacetylation of lysine residues on the N-terminal part of the core histones (H2A, H2B, H3 and H4) by recruiting other histone deacetylases. Histone deacetylation gives a tag for epigenetic repression and plays an important role in transcriptional regulation, cell cycle progression and developmental events. Represses MEF2-dependent transcription.</text>
</comment>
<comment type="catalytic activity">
    <reaction>
        <text>N(6)-acetyl-L-lysyl-[histone] + H2O = L-lysyl-[histone] + acetate</text>
        <dbReference type="Rhea" id="RHEA:58196"/>
        <dbReference type="Rhea" id="RHEA-COMP:9845"/>
        <dbReference type="Rhea" id="RHEA-COMP:11338"/>
        <dbReference type="ChEBI" id="CHEBI:15377"/>
        <dbReference type="ChEBI" id="CHEBI:29969"/>
        <dbReference type="ChEBI" id="CHEBI:30089"/>
        <dbReference type="ChEBI" id="CHEBI:61930"/>
        <dbReference type="EC" id="3.5.1.98"/>
    </reaction>
</comment>
<comment type="subunit">
    <text evidence="1 3">Homodimer (By similarity). Interacts with mef2.</text>
</comment>
<comment type="subcellular location">
    <subcellularLocation>
        <location evidence="1">Nucleus</location>
    </subcellularLocation>
</comment>
<comment type="tissue specificity">
    <text evidence="3">Broadly expressed.</text>
</comment>
<comment type="developmental stage">
    <text evidence="3">Broadly expressed at low levels at all stages.</text>
</comment>
<comment type="similarity">
    <text evidence="4">Belongs to the histone deacetylase family. HD type 2 subfamily.</text>
</comment>
<comment type="sequence caution" evidence="4">
    <conflict type="erroneous initiation">
        <sequence resource="EMBL-CDS" id="CAB10167"/>
    </conflict>
</comment>
<feature type="chain" id="PRO_0000280538" description="Histone deacetylase 9">
    <location>
        <begin position="1"/>
        <end position="596"/>
    </location>
</feature>
<feature type="region of interest" description="Disordered" evidence="2">
    <location>
        <begin position="132"/>
        <end position="172"/>
    </location>
</feature>
<feature type="region of interest" description="Interaction with mef2">
    <location>
        <begin position="172"/>
        <end position="222"/>
    </location>
</feature>
<feature type="region of interest" description="Disordered" evidence="2">
    <location>
        <begin position="214"/>
        <end position="258"/>
    </location>
</feature>
<feature type="region of interest" description="Disordered" evidence="2">
    <location>
        <begin position="293"/>
        <end position="313"/>
    </location>
</feature>
<feature type="region of interest" description="Disordered" evidence="2">
    <location>
        <begin position="522"/>
        <end position="596"/>
    </location>
</feature>
<feature type="compositionally biased region" description="Basic and acidic residues" evidence="2">
    <location>
        <begin position="132"/>
        <end position="153"/>
    </location>
</feature>
<feature type="compositionally biased region" description="Basic and acidic residues" evidence="2">
    <location>
        <begin position="160"/>
        <end position="172"/>
    </location>
</feature>
<feature type="compositionally biased region" description="Pro residues" evidence="2">
    <location>
        <begin position="221"/>
        <end position="237"/>
    </location>
</feature>
<feature type="compositionally biased region" description="Low complexity" evidence="2">
    <location>
        <begin position="293"/>
        <end position="312"/>
    </location>
</feature>
<feature type="compositionally biased region" description="Basic and acidic residues" evidence="2">
    <location>
        <begin position="522"/>
        <end position="536"/>
    </location>
</feature>
<feature type="compositionally biased region" description="Polar residues" evidence="2">
    <location>
        <begin position="541"/>
        <end position="558"/>
    </location>
</feature>
<feature type="compositionally biased region" description="Basic and acidic residues" evidence="2">
    <location>
        <begin position="567"/>
        <end position="585"/>
    </location>
</feature>
<feature type="compositionally biased region" description="Polar residues" evidence="2">
    <location>
        <begin position="586"/>
        <end position="596"/>
    </location>
</feature>
<reference key="1">
    <citation type="journal article" date="1999" name="EMBO J.">
        <title>MEF-2 function is modified by a novel co-repressor, MITR.</title>
        <authorList>
            <person name="Sparrow D.B."/>
            <person name="Miska E.A."/>
            <person name="Langley E."/>
            <person name="Reynaud-Deonauth S."/>
            <person name="Kotecha S."/>
            <person name="Towers N."/>
            <person name="Spohr G."/>
            <person name="Kouzarides T."/>
            <person name="Mohun T.J."/>
        </authorList>
    </citation>
    <scope>NUCLEOTIDE SEQUENCE [MRNA]</scope>
    <scope>INTERACTION WITH MEF2</scope>
    <scope>TISSUE SPECIFICITY</scope>
    <scope>DEVELOPMENTAL STAGE</scope>
    <scope>FUNCTION</scope>
</reference>
<reference key="2">
    <citation type="journal article" date="2000" name="Proc. Natl. Acad. Sci. U.S.A.">
        <title>Identification of a transcriptional repressor related to the noncatalytic domain of histone deacetylases 4 and 5.</title>
        <authorList>
            <person name="Zhou X."/>
            <person name="Richon V.M."/>
            <person name="Rifkind R.A."/>
            <person name="Marks P.A."/>
        </authorList>
    </citation>
    <scope>IDENTIFICATION</scope>
</reference>
<dbReference type="EC" id="3.5.1.98"/>
<dbReference type="EMBL" id="Z97214">
    <property type="protein sequence ID" value="CAB10167.1"/>
    <property type="status" value="ALT_INIT"/>
    <property type="molecule type" value="mRNA"/>
</dbReference>
<dbReference type="RefSeq" id="NP_001079307.1">
    <property type="nucleotide sequence ID" value="NM_001085838.1"/>
</dbReference>
<dbReference type="SMR" id="Q9YGY4"/>
<dbReference type="BioGRID" id="97196">
    <property type="interactions" value="1"/>
</dbReference>
<dbReference type="GeneID" id="378615"/>
<dbReference type="KEGG" id="xla:378615"/>
<dbReference type="AGR" id="Xenbase:XB-GENE-865808"/>
<dbReference type="CTD" id="378615"/>
<dbReference type="Xenbase" id="XB-GENE-865808">
    <property type="gene designation" value="hdac9.S"/>
</dbReference>
<dbReference type="OMA" id="NGFTHSA"/>
<dbReference type="OrthoDB" id="5232919at2759"/>
<dbReference type="Proteomes" id="UP000186698">
    <property type="component" value="Chromosome 6S"/>
</dbReference>
<dbReference type="Bgee" id="378615">
    <property type="expression patterns" value="Expressed in brain and 12 other cell types or tissues"/>
</dbReference>
<dbReference type="GO" id="GO:0005634">
    <property type="term" value="C:nucleus"/>
    <property type="evidence" value="ECO:0007669"/>
    <property type="project" value="UniProtKB-SubCell"/>
</dbReference>
<dbReference type="GO" id="GO:0141221">
    <property type="term" value="F:histone deacetylase activity, hydrolytic mechanism"/>
    <property type="evidence" value="ECO:0007669"/>
    <property type="project" value="UniProtKB-EC"/>
</dbReference>
<dbReference type="GO" id="GO:0006325">
    <property type="term" value="P:chromatin organization"/>
    <property type="evidence" value="ECO:0007669"/>
    <property type="project" value="UniProtKB-KW"/>
</dbReference>
<dbReference type="CDD" id="cd10163">
    <property type="entry name" value="ClassIIa_HDAC9_Gln-rich-N"/>
    <property type="match status" value="1"/>
</dbReference>
<dbReference type="Gene3D" id="6.10.250.1550">
    <property type="match status" value="1"/>
</dbReference>
<dbReference type="InterPro" id="IPR024643">
    <property type="entry name" value="Hist_deacetylase_Gln_rich_N"/>
</dbReference>
<dbReference type="PANTHER" id="PTHR45364:SF11">
    <property type="entry name" value="HISTONE DEACETYLASE 9"/>
    <property type="match status" value="1"/>
</dbReference>
<dbReference type="PANTHER" id="PTHR45364">
    <property type="entry name" value="HISTONE DEACETYLASE 9-RELATED"/>
    <property type="match status" value="1"/>
</dbReference>
<dbReference type="Pfam" id="PF12203">
    <property type="entry name" value="HDAC4_Gln"/>
    <property type="match status" value="1"/>
</dbReference>
<organism>
    <name type="scientific">Xenopus laevis</name>
    <name type="common">African clawed frog</name>
    <dbReference type="NCBI Taxonomy" id="8355"/>
    <lineage>
        <taxon>Eukaryota</taxon>
        <taxon>Metazoa</taxon>
        <taxon>Chordata</taxon>
        <taxon>Craniata</taxon>
        <taxon>Vertebrata</taxon>
        <taxon>Euteleostomi</taxon>
        <taxon>Amphibia</taxon>
        <taxon>Batrachia</taxon>
        <taxon>Anura</taxon>
        <taxon>Pipoidea</taxon>
        <taxon>Pipidae</taxon>
        <taxon>Xenopodinae</taxon>
        <taxon>Xenopus</taxon>
        <taxon>Xenopus</taxon>
    </lineage>
</organism>